<proteinExistence type="inferred from homology"/>
<feature type="chain" id="PRO_1000145871" description="NADH-quinone oxidoreductase subunit N">
    <location>
        <begin position="1"/>
        <end position="485"/>
    </location>
</feature>
<feature type="transmembrane region" description="Helical" evidence="1">
    <location>
        <begin position="8"/>
        <end position="28"/>
    </location>
</feature>
<feature type="transmembrane region" description="Helical" evidence="1">
    <location>
        <begin position="35"/>
        <end position="55"/>
    </location>
</feature>
<feature type="transmembrane region" description="Helical" evidence="1">
    <location>
        <begin position="75"/>
        <end position="95"/>
    </location>
</feature>
<feature type="transmembrane region" description="Helical" evidence="1">
    <location>
        <begin position="105"/>
        <end position="125"/>
    </location>
</feature>
<feature type="transmembrane region" description="Helical" evidence="1">
    <location>
        <begin position="127"/>
        <end position="147"/>
    </location>
</feature>
<feature type="transmembrane region" description="Helical" evidence="1">
    <location>
        <begin position="159"/>
        <end position="179"/>
    </location>
</feature>
<feature type="transmembrane region" description="Helical" evidence="1">
    <location>
        <begin position="203"/>
        <end position="223"/>
    </location>
</feature>
<feature type="transmembrane region" description="Helical" evidence="1">
    <location>
        <begin position="235"/>
        <end position="255"/>
    </location>
</feature>
<feature type="transmembrane region" description="Helical" evidence="1">
    <location>
        <begin position="271"/>
        <end position="291"/>
    </location>
</feature>
<feature type="transmembrane region" description="Helical" evidence="1">
    <location>
        <begin position="297"/>
        <end position="317"/>
    </location>
</feature>
<feature type="transmembrane region" description="Helical" evidence="1">
    <location>
        <begin position="326"/>
        <end position="346"/>
    </location>
</feature>
<feature type="transmembrane region" description="Helical" evidence="1">
    <location>
        <begin position="373"/>
        <end position="393"/>
    </location>
</feature>
<feature type="transmembrane region" description="Helical" evidence="1">
    <location>
        <begin position="408"/>
        <end position="427"/>
    </location>
</feature>
<feature type="transmembrane region" description="Helical" evidence="1">
    <location>
        <begin position="449"/>
        <end position="469"/>
    </location>
</feature>
<organism>
    <name type="scientific">Erwinia tasmaniensis (strain DSM 17950 / CFBP 7177 / CIP 109463 / NCPPB 4357 / Et1/99)</name>
    <dbReference type="NCBI Taxonomy" id="465817"/>
    <lineage>
        <taxon>Bacteria</taxon>
        <taxon>Pseudomonadati</taxon>
        <taxon>Pseudomonadota</taxon>
        <taxon>Gammaproteobacteria</taxon>
        <taxon>Enterobacterales</taxon>
        <taxon>Erwiniaceae</taxon>
        <taxon>Erwinia</taxon>
    </lineage>
</organism>
<accession>B2VIN7</accession>
<gene>
    <name evidence="1" type="primary">nuoN</name>
    <name type="ordered locus">ETA_12160</name>
</gene>
<name>NUON_ERWT9</name>
<evidence type="ECO:0000255" key="1">
    <source>
        <dbReference type="HAMAP-Rule" id="MF_00445"/>
    </source>
</evidence>
<keyword id="KW-0997">Cell inner membrane</keyword>
<keyword id="KW-1003">Cell membrane</keyword>
<keyword id="KW-0472">Membrane</keyword>
<keyword id="KW-0520">NAD</keyword>
<keyword id="KW-0874">Quinone</keyword>
<keyword id="KW-1185">Reference proteome</keyword>
<keyword id="KW-1278">Translocase</keyword>
<keyword id="KW-0812">Transmembrane</keyword>
<keyword id="KW-1133">Transmembrane helix</keyword>
<keyword id="KW-0813">Transport</keyword>
<keyword id="KW-0830">Ubiquinone</keyword>
<sequence>MTITPQQLIALLPLLIVGLTVVVVMLSIAWRRNHFVNATLAVVGLNLALFSLYFVGQAGPMDVTPLLRIDAYSMFYTGLVILASLATCTFAYPWLATYPDNREEFYLLVLIAALGGVVLASASHLASLFIGIELISLPLFGLVGYAFQQKRSLEAAIKYTILSAAASSFLLFGMALVYADSGNLGFMALGRSLNDDVIHQPLLLAGLGLMIVGFGFKLSLVPFHLWTPDVYQGAPAPVSTFLATASKIAIFGVLMRLFMYAPMANSEGVRTVLGIIAVASMLFGNLMAISQSNIKRLLGYSSIAHLGYLLVALIAVQSQQLSVETVGVYLAGYLFSSLGAFGVVSLMSSPYRGPDAESLYSYRGLFWHRPILAAVMTVMMLSLAGIPMTLGFIGKFYVIAVGVNAHLWWLTGAVVLGSAIGLYYYLRMTVSLYLSPPELMQRDSPANWAFTAGGVVVLISAILVLVLGIYPQPLISLVNLAQPLH</sequence>
<protein>
    <recommendedName>
        <fullName evidence="1">NADH-quinone oxidoreductase subunit N</fullName>
        <ecNumber evidence="1">7.1.1.-</ecNumber>
    </recommendedName>
    <alternativeName>
        <fullName evidence="1">NADH dehydrogenase I subunit N</fullName>
    </alternativeName>
    <alternativeName>
        <fullName evidence="1">NDH-1 subunit N</fullName>
    </alternativeName>
</protein>
<reference key="1">
    <citation type="journal article" date="2008" name="Environ. Microbiol.">
        <title>The genome of Erwinia tasmaniensis strain Et1/99, a non-pathogenic bacterium in the genus Erwinia.</title>
        <authorList>
            <person name="Kube M."/>
            <person name="Migdoll A.M."/>
            <person name="Mueller I."/>
            <person name="Kuhl H."/>
            <person name="Beck A."/>
            <person name="Reinhardt R."/>
            <person name="Geider K."/>
        </authorList>
    </citation>
    <scope>NUCLEOTIDE SEQUENCE [LARGE SCALE GENOMIC DNA]</scope>
    <source>
        <strain>DSM 17950 / CFBP 7177 / CIP 109463 / NCPPB 4357 / Et1/99</strain>
    </source>
</reference>
<comment type="function">
    <text evidence="1">NDH-1 shuttles electrons from NADH, via FMN and iron-sulfur (Fe-S) centers, to quinones in the respiratory chain. The immediate electron acceptor for the enzyme in this species is believed to be ubiquinone. Couples the redox reaction to proton translocation (for every two electrons transferred, four hydrogen ions are translocated across the cytoplasmic membrane), and thus conserves the redox energy in a proton gradient.</text>
</comment>
<comment type="catalytic activity">
    <reaction evidence="1">
        <text>a quinone + NADH + 5 H(+)(in) = a quinol + NAD(+) + 4 H(+)(out)</text>
        <dbReference type="Rhea" id="RHEA:57888"/>
        <dbReference type="ChEBI" id="CHEBI:15378"/>
        <dbReference type="ChEBI" id="CHEBI:24646"/>
        <dbReference type="ChEBI" id="CHEBI:57540"/>
        <dbReference type="ChEBI" id="CHEBI:57945"/>
        <dbReference type="ChEBI" id="CHEBI:132124"/>
    </reaction>
</comment>
<comment type="subunit">
    <text evidence="1">NDH-1 is composed of 13 different subunits. Subunits NuoA, H, J, K, L, M, N constitute the membrane sector of the complex.</text>
</comment>
<comment type="subcellular location">
    <subcellularLocation>
        <location evidence="1">Cell inner membrane</location>
        <topology evidence="1">Multi-pass membrane protein</topology>
    </subcellularLocation>
</comment>
<comment type="similarity">
    <text evidence="1">Belongs to the complex I subunit 2 family.</text>
</comment>
<dbReference type="EC" id="7.1.1.-" evidence="1"/>
<dbReference type="EMBL" id="CU468135">
    <property type="protein sequence ID" value="CAO96262.1"/>
    <property type="molecule type" value="Genomic_DNA"/>
</dbReference>
<dbReference type="RefSeq" id="WP_012440957.1">
    <property type="nucleotide sequence ID" value="NC_010694.1"/>
</dbReference>
<dbReference type="SMR" id="B2VIN7"/>
<dbReference type="STRING" id="465817.ETA_12160"/>
<dbReference type="KEGG" id="eta:ETA_12160"/>
<dbReference type="eggNOG" id="COG1007">
    <property type="taxonomic scope" value="Bacteria"/>
</dbReference>
<dbReference type="HOGENOM" id="CLU_007100_1_5_6"/>
<dbReference type="OrthoDB" id="9768329at2"/>
<dbReference type="Proteomes" id="UP000001726">
    <property type="component" value="Chromosome"/>
</dbReference>
<dbReference type="GO" id="GO:0005886">
    <property type="term" value="C:plasma membrane"/>
    <property type="evidence" value="ECO:0007669"/>
    <property type="project" value="UniProtKB-SubCell"/>
</dbReference>
<dbReference type="GO" id="GO:0008137">
    <property type="term" value="F:NADH dehydrogenase (ubiquinone) activity"/>
    <property type="evidence" value="ECO:0007669"/>
    <property type="project" value="InterPro"/>
</dbReference>
<dbReference type="GO" id="GO:0050136">
    <property type="term" value="F:NADH:ubiquinone reductase (non-electrogenic) activity"/>
    <property type="evidence" value="ECO:0007669"/>
    <property type="project" value="UniProtKB-UniRule"/>
</dbReference>
<dbReference type="GO" id="GO:0048038">
    <property type="term" value="F:quinone binding"/>
    <property type="evidence" value="ECO:0007669"/>
    <property type="project" value="UniProtKB-KW"/>
</dbReference>
<dbReference type="GO" id="GO:0042773">
    <property type="term" value="P:ATP synthesis coupled electron transport"/>
    <property type="evidence" value="ECO:0007669"/>
    <property type="project" value="InterPro"/>
</dbReference>
<dbReference type="HAMAP" id="MF_00445">
    <property type="entry name" value="NDH1_NuoN_1"/>
    <property type="match status" value="1"/>
</dbReference>
<dbReference type="InterPro" id="IPR010096">
    <property type="entry name" value="NADH-Q_OxRdtase_suN/2"/>
</dbReference>
<dbReference type="InterPro" id="IPR001750">
    <property type="entry name" value="ND/Mrp_TM"/>
</dbReference>
<dbReference type="NCBIfam" id="TIGR01770">
    <property type="entry name" value="NDH_I_N"/>
    <property type="match status" value="1"/>
</dbReference>
<dbReference type="NCBIfam" id="NF004439">
    <property type="entry name" value="PRK05777.1-1"/>
    <property type="match status" value="1"/>
</dbReference>
<dbReference type="PANTHER" id="PTHR22773">
    <property type="entry name" value="NADH DEHYDROGENASE"/>
    <property type="match status" value="1"/>
</dbReference>
<dbReference type="Pfam" id="PF00361">
    <property type="entry name" value="Proton_antipo_M"/>
    <property type="match status" value="1"/>
</dbReference>